<gene>
    <name evidence="1" type="primary">rpsO</name>
    <name type="ordered locus">ROP_66930</name>
</gene>
<comment type="function">
    <text evidence="1">One of the primary rRNA binding proteins, it binds directly to 16S rRNA where it helps nucleate assembly of the platform of the 30S subunit by binding and bridging several RNA helices of the 16S rRNA.</text>
</comment>
<comment type="function">
    <text evidence="1">Forms an intersubunit bridge (bridge B4) with the 23S rRNA of the 50S subunit in the ribosome.</text>
</comment>
<comment type="subunit">
    <text evidence="1">Part of the 30S ribosomal subunit. Forms a bridge to the 50S subunit in the 70S ribosome, contacting the 23S rRNA.</text>
</comment>
<comment type="similarity">
    <text evidence="1">Belongs to the universal ribosomal protein uS15 family.</text>
</comment>
<sequence>MALTTEEKKQVLSEYGLHETDTGSPEAQVAMLTKRIVDLTEHLKMHKHDHHSRRGLLLLVGRRRRLLKYVQKVDIARYRSLIERLGLRR</sequence>
<accession>C1B323</accession>
<reference key="1">
    <citation type="submission" date="2009-03" db="EMBL/GenBank/DDBJ databases">
        <title>Comparison of the complete genome sequences of Rhodococcus erythropolis PR4 and Rhodococcus opacus B4.</title>
        <authorList>
            <person name="Takarada H."/>
            <person name="Sekine M."/>
            <person name="Hosoyama A."/>
            <person name="Yamada R."/>
            <person name="Fujisawa T."/>
            <person name="Omata S."/>
            <person name="Shimizu A."/>
            <person name="Tsukatani N."/>
            <person name="Tanikawa S."/>
            <person name="Fujita N."/>
            <person name="Harayama S."/>
        </authorList>
    </citation>
    <scope>NUCLEOTIDE SEQUENCE [LARGE SCALE GENOMIC DNA]</scope>
    <source>
        <strain>B4</strain>
    </source>
</reference>
<name>RS15_RHOOB</name>
<protein>
    <recommendedName>
        <fullName evidence="1">Small ribosomal subunit protein uS15</fullName>
    </recommendedName>
    <alternativeName>
        <fullName evidence="3">30S ribosomal protein S15</fullName>
    </alternativeName>
</protein>
<evidence type="ECO:0000255" key="1">
    <source>
        <dbReference type="HAMAP-Rule" id="MF_01343"/>
    </source>
</evidence>
<evidence type="ECO:0000256" key="2">
    <source>
        <dbReference type="SAM" id="MobiDB-lite"/>
    </source>
</evidence>
<evidence type="ECO:0000305" key="3"/>
<keyword id="KW-0687">Ribonucleoprotein</keyword>
<keyword id="KW-0689">Ribosomal protein</keyword>
<keyword id="KW-0694">RNA-binding</keyword>
<keyword id="KW-0699">rRNA-binding</keyword>
<feature type="chain" id="PRO_1000166434" description="Small ribosomal subunit protein uS15">
    <location>
        <begin position="1"/>
        <end position="89"/>
    </location>
</feature>
<feature type="region of interest" description="Disordered" evidence="2">
    <location>
        <begin position="1"/>
        <end position="24"/>
    </location>
</feature>
<feature type="compositionally biased region" description="Basic and acidic residues" evidence="2">
    <location>
        <begin position="1"/>
        <end position="21"/>
    </location>
</feature>
<organism>
    <name type="scientific">Rhodococcus opacus (strain B4)</name>
    <dbReference type="NCBI Taxonomy" id="632772"/>
    <lineage>
        <taxon>Bacteria</taxon>
        <taxon>Bacillati</taxon>
        <taxon>Actinomycetota</taxon>
        <taxon>Actinomycetes</taxon>
        <taxon>Mycobacteriales</taxon>
        <taxon>Nocardiaceae</taxon>
        <taxon>Rhodococcus</taxon>
    </lineage>
</organism>
<proteinExistence type="inferred from homology"/>
<dbReference type="EMBL" id="AP011115">
    <property type="protein sequence ID" value="BAH54940.1"/>
    <property type="molecule type" value="Genomic_DNA"/>
</dbReference>
<dbReference type="RefSeq" id="WP_015890377.1">
    <property type="nucleotide sequence ID" value="NC_012522.1"/>
</dbReference>
<dbReference type="SMR" id="C1B323"/>
<dbReference type="STRING" id="632772.ROP_66930"/>
<dbReference type="KEGG" id="rop:ROP_66930"/>
<dbReference type="PATRIC" id="fig|632772.20.peg.6979"/>
<dbReference type="HOGENOM" id="CLU_148518_0_0_11"/>
<dbReference type="OrthoDB" id="9799262at2"/>
<dbReference type="Proteomes" id="UP000002212">
    <property type="component" value="Chromosome"/>
</dbReference>
<dbReference type="GO" id="GO:0022627">
    <property type="term" value="C:cytosolic small ribosomal subunit"/>
    <property type="evidence" value="ECO:0007669"/>
    <property type="project" value="TreeGrafter"/>
</dbReference>
<dbReference type="GO" id="GO:0019843">
    <property type="term" value="F:rRNA binding"/>
    <property type="evidence" value="ECO:0007669"/>
    <property type="project" value="UniProtKB-UniRule"/>
</dbReference>
<dbReference type="GO" id="GO:0003735">
    <property type="term" value="F:structural constituent of ribosome"/>
    <property type="evidence" value="ECO:0007669"/>
    <property type="project" value="InterPro"/>
</dbReference>
<dbReference type="GO" id="GO:0006412">
    <property type="term" value="P:translation"/>
    <property type="evidence" value="ECO:0007669"/>
    <property type="project" value="UniProtKB-UniRule"/>
</dbReference>
<dbReference type="CDD" id="cd00353">
    <property type="entry name" value="Ribosomal_S15p_S13e"/>
    <property type="match status" value="1"/>
</dbReference>
<dbReference type="FunFam" id="1.10.287.10:FF:000002">
    <property type="entry name" value="30S ribosomal protein S15"/>
    <property type="match status" value="1"/>
</dbReference>
<dbReference type="Gene3D" id="6.10.250.3130">
    <property type="match status" value="1"/>
</dbReference>
<dbReference type="Gene3D" id="1.10.287.10">
    <property type="entry name" value="S15/NS1, RNA-binding"/>
    <property type="match status" value="1"/>
</dbReference>
<dbReference type="HAMAP" id="MF_01343_B">
    <property type="entry name" value="Ribosomal_uS15_B"/>
    <property type="match status" value="1"/>
</dbReference>
<dbReference type="InterPro" id="IPR000589">
    <property type="entry name" value="Ribosomal_uS15"/>
</dbReference>
<dbReference type="InterPro" id="IPR005290">
    <property type="entry name" value="Ribosomal_uS15_bac-type"/>
</dbReference>
<dbReference type="InterPro" id="IPR009068">
    <property type="entry name" value="uS15_NS1_RNA-bd_sf"/>
</dbReference>
<dbReference type="NCBIfam" id="TIGR00952">
    <property type="entry name" value="S15_bact"/>
    <property type="match status" value="1"/>
</dbReference>
<dbReference type="PANTHER" id="PTHR23321">
    <property type="entry name" value="RIBOSOMAL PROTEIN S15, BACTERIAL AND ORGANELLAR"/>
    <property type="match status" value="1"/>
</dbReference>
<dbReference type="PANTHER" id="PTHR23321:SF26">
    <property type="entry name" value="SMALL RIBOSOMAL SUBUNIT PROTEIN US15M"/>
    <property type="match status" value="1"/>
</dbReference>
<dbReference type="Pfam" id="PF00312">
    <property type="entry name" value="Ribosomal_S15"/>
    <property type="match status" value="1"/>
</dbReference>
<dbReference type="SMART" id="SM01387">
    <property type="entry name" value="Ribosomal_S15"/>
    <property type="match status" value="1"/>
</dbReference>
<dbReference type="SUPFAM" id="SSF47060">
    <property type="entry name" value="S15/NS1 RNA-binding domain"/>
    <property type="match status" value="1"/>
</dbReference>
<dbReference type="PROSITE" id="PS00362">
    <property type="entry name" value="RIBOSOMAL_S15"/>
    <property type="match status" value="1"/>
</dbReference>